<organism>
    <name type="scientific">Arabidopsis thaliana</name>
    <name type="common">Mouse-ear cress</name>
    <dbReference type="NCBI Taxonomy" id="3702"/>
    <lineage>
        <taxon>Eukaryota</taxon>
        <taxon>Viridiplantae</taxon>
        <taxon>Streptophyta</taxon>
        <taxon>Embryophyta</taxon>
        <taxon>Tracheophyta</taxon>
        <taxon>Spermatophyta</taxon>
        <taxon>Magnoliopsida</taxon>
        <taxon>eudicotyledons</taxon>
        <taxon>Gunneridae</taxon>
        <taxon>Pentapetalae</taxon>
        <taxon>rosids</taxon>
        <taxon>malvids</taxon>
        <taxon>Brassicales</taxon>
        <taxon>Brassicaceae</taxon>
        <taxon>Camelineae</taxon>
        <taxon>Arabidopsis</taxon>
    </lineage>
</organism>
<reference key="1">
    <citation type="journal article" date="1999" name="Nature">
        <title>Sequence and analysis of chromosome 2 of the plant Arabidopsis thaliana.</title>
        <authorList>
            <person name="Lin X."/>
            <person name="Kaul S."/>
            <person name="Rounsley S.D."/>
            <person name="Shea T.P."/>
            <person name="Benito M.-I."/>
            <person name="Town C.D."/>
            <person name="Fujii C.Y."/>
            <person name="Mason T.M."/>
            <person name="Bowman C.L."/>
            <person name="Barnstead M.E."/>
            <person name="Feldblyum T.V."/>
            <person name="Buell C.R."/>
            <person name="Ketchum K.A."/>
            <person name="Lee J.J."/>
            <person name="Ronning C.M."/>
            <person name="Koo H.L."/>
            <person name="Moffat K.S."/>
            <person name="Cronin L.A."/>
            <person name="Shen M."/>
            <person name="Pai G."/>
            <person name="Van Aken S."/>
            <person name="Umayam L."/>
            <person name="Tallon L.J."/>
            <person name="Gill J.E."/>
            <person name="Adams M.D."/>
            <person name="Carrera A.J."/>
            <person name="Creasy T.H."/>
            <person name="Goodman H.M."/>
            <person name="Somerville C.R."/>
            <person name="Copenhaver G.P."/>
            <person name="Preuss D."/>
            <person name="Nierman W.C."/>
            <person name="White O."/>
            <person name="Eisen J.A."/>
            <person name="Salzberg S.L."/>
            <person name="Fraser C.M."/>
            <person name="Venter J.C."/>
        </authorList>
    </citation>
    <scope>NUCLEOTIDE SEQUENCE [LARGE SCALE GENOMIC DNA]</scope>
    <source>
        <strain>cv. Columbia</strain>
    </source>
</reference>
<reference key="2">
    <citation type="journal article" date="2017" name="Plant J.">
        <title>Araport11: a complete reannotation of the Arabidopsis thaliana reference genome.</title>
        <authorList>
            <person name="Cheng C.Y."/>
            <person name="Krishnakumar V."/>
            <person name="Chan A.P."/>
            <person name="Thibaud-Nissen F."/>
            <person name="Schobel S."/>
            <person name="Town C.D."/>
        </authorList>
    </citation>
    <scope>GENOME REANNOTATION</scope>
    <source>
        <strain>cv. Columbia</strain>
    </source>
</reference>
<reference key="3">
    <citation type="journal article" date="2002" name="Science">
        <title>Functional annotation of a full-length Arabidopsis cDNA collection.</title>
        <authorList>
            <person name="Seki M."/>
            <person name="Narusaka M."/>
            <person name="Kamiya A."/>
            <person name="Ishida J."/>
            <person name="Satou M."/>
            <person name="Sakurai T."/>
            <person name="Nakajima M."/>
            <person name="Enju A."/>
            <person name="Akiyama K."/>
            <person name="Oono Y."/>
            <person name="Muramatsu M."/>
            <person name="Hayashizaki Y."/>
            <person name="Kawai J."/>
            <person name="Carninci P."/>
            <person name="Itoh M."/>
            <person name="Ishii Y."/>
            <person name="Arakawa T."/>
            <person name="Shibata K."/>
            <person name="Shinagawa A."/>
            <person name="Shinozaki K."/>
        </authorList>
    </citation>
    <scope>NUCLEOTIDE SEQUENCE [LARGE SCALE MRNA] (ISOFORM 1)</scope>
    <source>
        <strain>cv. Columbia</strain>
    </source>
</reference>
<reference key="4">
    <citation type="submission" date="2004-09" db="EMBL/GenBank/DDBJ databases">
        <title>Large-scale analysis of RIKEN Arabidopsis full-length (RAFL) cDNAs.</title>
        <authorList>
            <person name="Totoki Y."/>
            <person name="Seki M."/>
            <person name="Ishida J."/>
            <person name="Nakajima M."/>
            <person name="Enju A."/>
            <person name="Kamiya A."/>
            <person name="Narusaka M."/>
            <person name="Shin-i T."/>
            <person name="Nakagawa M."/>
            <person name="Sakamoto N."/>
            <person name="Oishi K."/>
            <person name="Kohara Y."/>
            <person name="Kobayashi M."/>
            <person name="Toyoda A."/>
            <person name="Sakaki Y."/>
            <person name="Sakurai T."/>
            <person name="Iida K."/>
            <person name="Akiyama K."/>
            <person name="Satou M."/>
            <person name="Toyoda T."/>
            <person name="Konagaya A."/>
            <person name="Carninci P."/>
            <person name="Kawai J."/>
            <person name="Hayashizaki Y."/>
            <person name="Shinozaki K."/>
        </authorList>
    </citation>
    <scope>NUCLEOTIDE SEQUENCE [LARGE SCALE MRNA] (ISOFORMS 1 AND 2)</scope>
    <source>
        <strain>cv. Columbia</strain>
    </source>
</reference>
<reference key="5">
    <citation type="journal article" date="2005" name="Plant J.">
        <title>UPF3 suppresses aberrant spliced mRNA in Arabidopsis.</title>
        <authorList>
            <person name="Hori K."/>
            <person name="Watanabe Y."/>
        </authorList>
    </citation>
    <scope>ALTERNATIVE SPLICING</scope>
</reference>
<reference key="6">
    <citation type="journal article" date="2009" name="BMC Plant Biol.">
        <title>Characterization of two Arabidopsis thaliana acyltransferases with preference for lysophosphatidylethanolamine.</title>
        <authorList>
            <person name="Staalberg K."/>
            <person name="Staahl U."/>
            <person name="Stymne S."/>
            <person name="Ohlrogge J."/>
        </authorList>
    </citation>
    <scope>FUNCTION</scope>
    <scope>CATALYTIC ACTIVITY</scope>
    <scope>BIOPHYSICOCHEMICAL PROPERTIES</scope>
    <scope>SUBSTRATE SPECIFICITY</scope>
</reference>
<reference key="7">
    <citation type="journal article" date="2017" name="Plant Physiol.">
        <title>Acyl-CoA:lysophosphatidylethanolamine acyltransferase activity regulates growth of Arabidopsis.</title>
        <authorList>
            <person name="Jasieniecka-Gazarkiewicz K."/>
            <person name="Lager I."/>
            <person name="Carlsson A.S."/>
            <person name="Gutbrod K."/>
            <person name="Peisker H."/>
            <person name="Doermann P."/>
            <person name="Stymne S."/>
            <person name="Banas A."/>
        </authorList>
    </citation>
    <scope>FUNCTION</scope>
    <scope>CATALYTIC ACTIVITY</scope>
    <scope>DISRUPTION PHENOTYPE</scope>
</reference>
<reference key="8">
    <citation type="journal article" date="2021" name="Int. J. Mol. Sci.">
        <title>Subcellular localization of acyl-CoA: lysophosphatidylethanolamine acyltransferases (LPEATs) and the effects of knocking-out and overexpression of their genes on autophagy markers level and life span of A. thaliana.</title>
        <authorList>
            <person name="Jasieniecka-Gazarkiewicz K."/>
            <person name="Demski K."/>
            <person name="Gidda S.K."/>
            <person name="Klinska S."/>
            <person name="Niedojadlo J."/>
            <person name="Lager I."/>
            <person name="Carlsson A.S."/>
            <person name="Minina E.A."/>
            <person name="Mullen R.T."/>
            <person name="Bozhkov P.V."/>
            <person name="Stymne S."/>
            <person name="Banas A."/>
        </authorList>
    </citation>
    <scope>SUBCELLULAR LOCATION</scope>
    <scope>DISRUPTION PHENOTYPE</scope>
</reference>
<accession>Q8S8S2</accession>
<accession>O64646</accession>
<accession>Q8GY20</accession>
<gene>
    <name evidence="7" type="primary">LPEAT2</name>
    <name evidence="11" type="ordered locus">At2g45670</name>
    <name type="ORF">F17K2.20</name>
</gene>
<dbReference type="EC" id="2.3.1.23" evidence="4 5"/>
<dbReference type="EC" id="2.3.1.n6" evidence="4"/>
<dbReference type="EC" id="2.3.1.n7" evidence="4 5"/>
<dbReference type="EMBL" id="AC003680">
    <property type="protein sequence ID" value="AAC06169.1"/>
    <property type="molecule type" value="Genomic_DNA"/>
</dbReference>
<dbReference type="EMBL" id="AC003680">
    <property type="protein sequence ID" value="AAM14898.1"/>
    <property type="molecule type" value="Genomic_DNA"/>
</dbReference>
<dbReference type="EMBL" id="CP002685">
    <property type="protein sequence ID" value="AEC10584.1"/>
    <property type="molecule type" value="Genomic_DNA"/>
</dbReference>
<dbReference type="EMBL" id="CP002685">
    <property type="protein sequence ID" value="AEC10585.1"/>
    <property type="molecule type" value="Genomic_DNA"/>
</dbReference>
<dbReference type="EMBL" id="AK117916">
    <property type="protein sequence ID" value="BAC42554.1"/>
    <property type="molecule type" value="mRNA"/>
</dbReference>
<dbReference type="EMBL" id="AK175608">
    <property type="protein sequence ID" value="BAD43371.1"/>
    <property type="molecule type" value="mRNA"/>
</dbReference>
<dbReference type="EMBL" id="AK175656">
    <property type="protein sequence ID" value="BAD43419.1"/>
    <property type="molecule type" value="mRNA"/>
</dbReference>
<dbReference type="EMBL" id="AK175838">
    <property type="protein sequence ID" value="BAD43601.1"/>
    <property type="molecule type" value="mRNA"/>
</dbReference>
<dbReference type="EMBL" id="AK176251">
    <property type="protein sequence ID" value="BAD44014.1"/>
    <property type="molecule type" value="mRNA"/>
</dbReference>
<dbReference type="EMBL" id="AK176419">
    <property type="protein sequence ID" value="BAD44182.1"/>
    <property type="molecule type" value="mRNA"/>
</dbReference>
<dbReference type="EMBL" id="AK176460">
    <property type="protein sequence ID" value="BAD44223.1"/>
    <property type="molecule type" value="mRNA"/>
</dbReference>
<dbReference type="PIR" id="T00880">
    <property type="entry name" value="T00880"/>
</dbReference>
<dbReference type="RefSeq" id="NP_566051.1">
    <molecule id="Q8S8S2-1"/>
    <property type="nucleotide sequence ID" value="NM_130129.5"/>
</dbReference>
<dbReference type="RefSeq" id="NP_566052.1">
    <molecule id="Q8S8S2-2"/>
    <property type="nucleotide sequence ID" value="NM_130130.4"/>
</dbReference>
<dbReference type="SMR" id="Q8S8S2"/>
<dbReference type="BioGRID" id="4511">
    <property type="interactions" value="10"/>
</dbReference>
<dbReference type="FunCoup" id="Q8S8S2">
    <property type="interactions" value="2010"/>
</dbReference>
<dbReference type="IntAct" id="Q8S8S2">
    <property type="interactions" value="10"/>
</dbReference>
<dbReference type="STRING" id="3702.Q8S8S2"/>
<dbReference type="PaxDb" id="3702-AT2G45670.1"/>
<dbReference type="ProteomicsDB" id="238482">
    <molecule id="Q8S8S2-1"/>
</dbReference>
<dbReference type="EnsemblPlants" id="AT2G45670.1">
    <molecule id="Q8S8S2-1"/>
    <property type="protein sequence ID" value="AT2G45670.1"/>
    <property type="gene ID" value="AT2G45670"/>
</dbReference>
<dbReference type="EnsemblPlants" id="AT2G45670.2">
    <molecule id="Q8S8S2-2"/>
    <property type="protein sequence ID" value="AT2G45670.2"/>
    <property type="gene ID" value="AT2G45670"/>
</dbReference>
<dbReference type="GeneID" id="819175"/>
<dbReference type="Gramene" id="AT2G45670.1">
    <molecule id="Q8S8S2-1"/>
    <property type="protein sequence ID" value="AT2G45670.1"/>
    <property type="gene ID" value="AT2G45670"/>
</dbReference>
<dbReference type="Gramene" id="AT2G45670.2">
    <molecule id="Q8S8S2-2"/>
    <property type="protein sequence ID" value="AT2G45670.2"/>
    <property type="gene ID" value="AT2G45670"/>
</dbReference>
<dbReference type="KEGG" id="ath:AT2G45670"/>
<dbReference type="Araport" id="AT2G45670"/>
<dbReference type="TAIR" id="AT2G45670">
    <property type="gene designation" value="LPEAT2"/>
</dbReference>
<dbReference type="eggNOG" id="KOG0032">
    <property type="taxonomic scope" value="Eukaryota"/>
</dbReference>
<dbReference type="eggNOG" id="KOG2898">
    <property type="taxonomic scope" value="Eukaryota"/>
</dbReference>
<dbReference type="HOGENOM" id="CLU_025017_3_1_1"/>
<dbReference type="InParanoid" id="Q8S8S2"/>
<dbReference type="OMA" id="FLYHKSE"/>
<dbReference type="OrthoDB" id="272512at2759"/>
<dbReference type="PhylomeDB" id="Q8S8S2"/>
<dbReference type="BioCyc" id="ARA:AT2G45670-MONOMER"/>
<dbReference type="BRENDA" id="2.3.1.121">
    <property type="organism ID" value="399"/>
</dbReference>
<dbReference type="UniPathway" id="UPA00085"/>
<dbReference type="PRO" id="PR:Q8S8S2"/>
<dbReference type="Proteomes" id="UP000006548">
    <property type="component" value="Chromosome 2"/>
</dbReference>
<dbReference type="ExpressionAtlas" id="Q8S8S2">
    <property type="expression patterns" value="baseline and differential"/>
</dbReference>
<dbReference type="GO" id="GO:0000139">
    <property type="term" value="C:Golgi membrane"/>
    <property type="evidence" value="ECO:0007669"/>
    <property type="project" value="UniProtKB-SubCell"/>
</dbReference>
<dbReference type="GO" id="GO:0031902">
    <property type="term" value="C:late endosome membrane"/>
    <property type="evidence" value="ECO:0007669"/>
    <property type="project" value="UniProtKB-SubCell"/>
</dbReference>
<dbReference type="GO" id="GO:0047184">
    <property type="term" value="F:1-acylglycerophosphocholine O-acyltransferase activity"/>
    <property type="evidence" value="ECO:0007669"/>
    <property type="project" value="RHEA"/>
</dbReference>
<dbReference type="GO" id="GO:0106262">
    <property type="term" value="F:1-acylglycerophosphoethanolamine O-acyltransferase activity"/>
    <property type="evidence" value="ECO:0007669"/>
    <property type="project" value="RHEA"/>
</dbReference>
<dbReference type="GO" id="GO:0106263">
    <property type="term" value="F:1-acylglycerophosphoserine O-acyltransferase activity"/>
    <property type="evidence" value="ECO:0007669"/>
    <property type="project" value="RHEA"/>
</dbReference>
<dbReference type="GO" id="GO:0005509">
    <property type="term" value="F:calcium ion binding"/>
    <property type="evidence" value="ECO:0007669"/>
    <property type="project" value="InterPro"/>
</dbReference>
<dbReference type="GO" id="GO:0071618">
    <property type="term" value="F:lysophosphatidylethanolamine acyltransferase activity"/>
    <property type="evidence" value="ECO:0000314"/>
    <property type="project" value="UniProtKB"/>
</dbReference>
<dbReference type="GO" id="GO:0071617">
    <property type="term" value="F:lysophospholipid acyltransferase activity"/>
    <property type="evidence" value="ECO:0000314"/>
    <property type="project" value="UniProtKB"/>
</dbReference>
<dbReference type="GO" id="GO:0047159">
    <property type="term" value="F:plasmalogen synthase activity"/>
    <property type="evidence" value="ECO:0007669"/>
    <property type="project" value="UniProtKB-EC"/>
</dbReference>
<dbReference type="GO" id="GO:0008654">
    <property type="term" value="P:phospholipid biosynthetic process"/>
    <property type="evidence" value="ECO:0007669"/>
    <property type="project" value="UniProtKB-KW"/>
</dbReference>
<dbReference type="GO" id="GO:0006644">
    <property type="term" value="P:phospholipid metabolic process"/>
    <property type="evidence" value="ECO:0000314"/>
    <property type="project" value="UniProtKB"/>
</dbReference>
<dbReference type="GO" id="GO:0000038">
    <property type="term" value="P:very long-chain fatty acid metabolic process"/>
    <property type="evidence" value="ECO:0000314"/>
    <property type="project" value="TAIR"/>
</dbReference>
<dbReference type="CDD" id="cd00051">
    <property type="entry name" value="EFh"/>
    <property type="match status" value="2"/>
</dbReference>
<dbReference type="CDD" id="cd07991">
    <property type="entry name" value="LPLAT_LPCAT1-like"/>
    <property type="match status" value="1"/>
</dbReference>
<dbReference type="Gene3D" id="1.10.238.10">
    <property type="entry name" value="EF-hand"/>
    <property type="match status" value="1"/>
</dbReference>
<dbReference type="InterPro" id="IPR011992">
    <property type="entry name" value="EF-hand-dom_pair"/>
</dbReference>
<dbReference type="InterPro" id="IPR018247">
    <property type="entry name" value="EF_Hand_1_Ca_BS"/>
</dbReference>
<dbReference type="InterPro" id="IPR002048">
    <property type="entry name" value="EF_hand_dom"/>
</dbReference>
<dbReference type="InterPro" id="IPR045252">
    <property type="entry name" value="LPCAT1-like"/>
</dbReference>
<dbReference type="InterPro" id="IPR002123">
    <property type="entry name" value="Plipid/glycerol_acylTrfase"/>
</dbReference>
<dbReference type="PANTHER" id="PTHR23063:SF52">
    <property type="entry name" value="LYSOPHOSPHATIDYLCHOLINE ACYLTRANSFERASE"/>
    <property type="match status" value="1"/>
</dbReference>
<dbReference type="PANTHER" id="PTHR23063">
    <property type="entry name" value="PHOSPHOLIPID ACYLTRANSFERASE"/>
    <property type="match status" value="1"/>
</dbReference>
<dbReference type="Pfam" id="PF01553">
    <property type="entry name" value="Acyltransferase"/>
    <property type="match status" value="1"/>
</dbReference>
<dbReference type="Pfam" id="PF13499">
    <property type="entry name" value="EF-hand_7"/>
    <property type="match status" value="1"/>
</dbReference>
<dbReference type="SMART" id="SM00054">
    <property type="entry name" value="EFh"/>
    <property type="match status" value="3"/>
</dbReference>
<dbReference type="SMART" id="SM00563">
    <property type="entry name" value="PlsC"/>
    <property type="match status" value="1"/>
</dbReference>
<dbReference type="SUPFAM" id="SSF47473">
    <property type="entry name" value="EF-hand"/>
    <property type="match status" value="1"/>
</dbReference>
<dbReference type="SUPFAM" id="SSF69593">
    <property type="entry name" value="Glycerol-3-phosphate (1)-acyltransferase"/>
    <property type="match status" value="1"/>
</dbReference>
<dbReference type="PROSITE" id="PS00018">
    <property type="entry name" value="EF_HAND_1"/>
    <property type="match status" value="2"/>
</dbReference>
<dbReference type="PROSITE" id="PS50222">
    <property type="entry name" value="EF_HAND_2"/>
    <property type="match status" value="3"/>
</dbReference>
<feature type="chain" id="PRO_0000422379" description="Lysophospholipid acyltransferase LPEAT2">
    <location>
        <begin position="1"/>
        <end position="539"/>
    </location>
</feature>
<feature type="transmembrane region" description="Helical" evidence="2">
    <location>
        <begin position="93"/>
        <end position="113"/>
    </location>
</feature>
<feature type="domain" description="EF-hand 1" evidence="3">
    <location>
        <begin position="426"/>
        <end position="455"/>
    </location>
</feature>
<feature type="domain" description="EF-hand 2" evidence="3">
    <location>
        <begin position="457"/>
        <end position="492"/>
    </location>
</feature>
<feature type="domain" description="EF-hand 3" evidence="3">
    <location>
        <begin position="493"/>
        <end position="528"/>
    </location>
</feature>
<feature type="short sequence motif" description="HXXXXD motif" evidence="1">
    <location>
        <begin position="178"/>
        <end position="183"/>
    </location>
</feature>
<feature type="binding site" evidence="3">
    <location>
        <position position="470"/>
    </location>
    <ligand>
        <name>Ca(2+)</name>
        <dbReference type="ChEBI" id="CHEBI:29108"/>
        <label>1</label>
    </ligand>
</feature>
<feature type="binding site" evidence="3">
    <location>
        <position position="472"/>
    </location>
    <ligand>
        <name>Ca(2+)</name>
        <dbReference type="ChEBI" id="CHEBI:29108"/>
        <label>1</label>
    </ligand>
</feature>
<feature type="binding site" evidence="3">
    <location>
        <position position="474"/>
    </location>
    <ligand>
        <name>Ca(2+)</name>
        <dbReference type="ChEBI" id="CHEBI:29108"/>
        <label>1</label>
    </ligand>
</feature>
<feature type="binding site" evidence="3">
    <location>
        <position position="476"/>
    </location>
    <ligand>
        <name>Ca(2+)</name>
        <dbReference type="ChEBI" id="CHEBI:29108"/>
        <label>1</label>
    </ligand>
</feature>
<feature type="binding site" evidence="3">
    <location>
        <position position="481"/>
    </location>
    <ligand>
        <name>Ca(2+)</name>
        <dbReference type="ChEBI" id="CHEBI:29108"/>
        <label>1</label>
    </ligand>
</feature>
<feature type="binding site" evidence="3">
    <location>
        <position position="506"/>
    </location>
    <ligand>
        <name>Ca(2+)</name>
        <dbReference type="ChEBI" id="CHEBI:29108"/>
        <label>2</label>
    </ligand>
</feature>
<feature type="binding site" evidence="3">
    <location>
        <position position="508"/>
    </location>
    <ligand>
        <name>Ca(2+)</name>
        <dbReference type="ChEBI" id="CHEBI:29108"/>
        <label>2</label>
    </ligand>
</feature>
<feature type="binding site" evidence="3">
    <location>
        <position position="510"/>
    </location>
    <ligand>
        <name>Ca(2+)</name>
        <dbReference type="ChEBI" id="CHEBI:29108"/>
        <label>2</label>
    </ligand>
</feature>
<feature type="binding site" evidence="3">
    <location>
        <position position="512"/>
    </location>
    <ligand>
        <name>Ca(2+)</name>
        <dbReference type="ChEBI" id="CHEBI:29108"/>
        <label>2</label>
    </ligand>
</feature>
<feature type="binding site" evidence="3">
    <location>
        <position position="517"/>
    </location>
    <ligand>
        <name>Ca(2+)</name>
        <dbReference type="ChEBI" id="CHEBI:29108"/>
        <label>2</label>
    </ligand>
</feature>
<feature type="splice variant" id="VSP_046521" description="In isoform 2." evidence="8">
    <original>RKASCDRFPRLLLFPEGTTTNGKVLISFQLGAFIPGYPIQPVVVRY</original>
    <variation>GCKYREKLPAIDFLVCCYSPKEPRLMGKFLFPSNSVLSSLVTLFNL</variation>
    <location>
        <begin position="236"/>
        <end position="281"/>
    </location>
</feature>
<feature type="splice variant" id="VSP_046522" description="In isoform 2." evidence="8">
    <location>
        <begin position="282"/>
        <end position="539"/>
    </location>
</feature>
<feature type="sequence conflict" description="In Ref. 3; BAC42554 and 4; BAD43371/BAD43419/BAD43601." evidence="9" ref="3 4">
    <original>E</original>
    <variation>G</variation>
    <location>
        <position position="233"/>
    </location>
</feature>
<evidence type="ECO:0000250" key="1">
    <source>
        <dbReference type="UniProtKB" id="Q3TFD2"/>
    </source>
</evidence>
<evidence type="ECO:0000255" key="2"/>
<evidence type="ECO:0000255" key="3">
    <source>
        <dbReference type="PROSITE-ProRule" id="PRU00448"/>
    </source>
</evidence>
<evidence type="ECO:0000269" key="4">
    <source>
    </source>
</evidence>
<evidence type="ECO:0000269" key="5">
    <source>
    </source>
</evidence>
<evidence type="ECO:0000269" key="6">
    <source>
    </source>
</evidence>
<evidence type="ECO:0000303" key="7">
    <source>
    </source>
</evidence>
<evidence type="ECO:0000303" key="8">
    <source ref="4"/>
</evidence>
<evidence type="ECO:0000305" key="9"/>
<evidence type="ECO:0000305" key="10">
    <source>
    </source>
</evidence>
<evidence type="ECO:0000312" key="11">
    <source>
        <dbReference type="Araport" id="AT2G45670"/>
    </source>
</evidence>
<protein>
    <recommendedName>
        <fullName evidence="7">Lysophospholipid acyltransferase LPEAT2</fullName>
        <ecNumber evidence="4 5">2.3.1.23</ecNumber>
        <ecNumber evidence="4">2.3.1.n6</ecNumber>
        <ecNumber evidence="4 5">2.3.1.n7</ecNumber>
    </recommendedName>
    <alternativeName>
        <fullName evidence="7">Lysophosphatidylethanolamine acyltransferase 2</fullName>
        <shortName evidence="7">AtLPEAT2</shortName>
    </alternativeName>
</protein>
<comment type="function">
    <text evidence="4 5">Possesses acyl-CoA-dependent lysophospholipid acyltransferase activity with a subset of lysophospholipids as substrates (PubMed:19445718, PubMed:28408542). Exhibits strong acylation activity on lysophosphatidylethanolamine (LPE), and lower activity on lysophosphatidylcholine (LPC) and lysophosphatidylserine (LPS) (PubMed:19445718). Exhibits acylation activity on both LPE and LPC (PubMed:28408542). Has a preference for 18:1-LPE over 16:0-LPE as acceptor (PubMed:19445718). Palmitoyl-CoA (16:0-CoA) is a better acyl donor than oleoyl-CoA (18:1-CoA) (PubMed:19445718, PubMed:28408542). Among several different acyl-CoA species the best acyl donor is eicosanoyl-CoA (20:0-CoA) (PubMed:28408542). Activity is calcium-independent (PubMed:19445718). Its activity is essential for maintaining adequate levels of phosphatidylethanolamine (PE), LPE and LPC in the cells, which is crucial for plant growth regulation (PubMed:28408542).</text>
</comment>
<comment type="catalytic activity">
    <reaction evidence="4 5">
        <text>a 1-acyl-sn-glycero-3-phosphoethanolamine + an acyl-CoA = a 1,2-diacyl-sn-glycero-3-phosphoethanolamine + CoA</text>
        <dbReference type="Rhea" id="RHEA:32995"/>
        <dbReference type="ChEBI" id="CHEBI:57287"/>
        <dbReference type="ChEBI" id="CHEBI:58342"/>
        <dbReference type="ChEBI" id="CHEBI:64381"/>
        <dbReference type="ChEBI" id="CHEBI:64612"/>
        <dbReference type="EC" id="2.3.1.n7"/>
    </reaction>
    <physiologicalReaction direction="left-to-right" evidence="4 5">
        <dbReference type="Rhea" id="RHEA:32996"/>
    </physiologicalReaction>
</comment>
<comment type="catalytic activity">
    <reaction evidence="4 5">
        <text>a 1-acyl-sn-glycero-3-phosphocholine + an acyl-CoA = a 1,2-diacyl-sn-glycero-3-phosphocholine + CoA</text>
        <dbReference type="Rhea" id="RHEA:12937"/>
        <dbReference type="ChEBI" id="CHEBI:57287"/>
        <dbReference type="ChEBI" id="CHEBI:57643"/>
        <dbReference type="ChEBI" id="CHEBI:58168"/>
        <dbReference type="ChEBI" id="CHEBI:58342"/>
        <dbReference type="EC" id="2.3.1.23"/>
    </reaction>
    <physiologicalReaction direction="left-to-right" evidence="4 5">
        <dbReference type="Rhea" id="RHEA:12938"/>
    </physiologicalReaction>
</comment>
<comment type="catalytic activity">
    <reaction evidence="4">
        <text>a 1-acyl-sn-glycero-3-phospho-L-serine + an acyl-CoA = a 1,2-diacyl-sn-glycero-3-phospho-L-serine + CoA</text>
        <dbReference type="Rhea" id="RHEA:33191"/>
        <dbReference type="ChEBI" id="CHEBI:57262"/>
        <dbReference type="ChEBI" id="CHEBI:57287"/>
        <dbReference type="ChEBI" id="CHEBI:58342"/>
        <dbReference type="ChEBI" id="CHEBI:64379"/>
        <dbReference type="EC" id="2.3.1.n6"/>
    </reaction>
    <physiologicalReaction direction="left-to-right" evidence="4">
        <dbReference type="Rhea" id="RHEA:33192"/>
    </physiologicalReaction>
</comment>
<comment type="biophysicochemical properties">
    <phDependence>
        <text evidence="4">Optimum pH is 9.0.</text>
    </phDependence>
</comment>
<comment type="pathway">
    <text evidence="9">Lipid metabolism; phospholipid metabolism.</text>
</comment>
<comment type="subcellular location">
    <subcellularLocation>
        <location evidence="6">Golgi apparatus membrane</location>
        <topology evidence="2">Single-pass membrane protein</topology>
    </subcellularLocation>
    <subcellularLocation>
        <location evidence="6">Late endosome membrane</location>
        <topology evidence="2">Single-pass membrane protein</topology>
    </subcellularLocation>
</comment>
<comment type="alternative products">
    <event type="alternative splicing"/>
    <isoform>
        <id>Q8S8S2-1</id>
        <name>1</name>
        <sequence type="displayed"/>
    </isoform>
    <isoform>
        <id>Q8S8S2-2</id>
        <name>2</name>
        <sequence type="described" ref="VSP_046521 VSP_046522"/>
    </isoform>
</comment>
<comment type="domain">
    <text evidence="1">The HXXXXD motif is essential for acyltransferase activity and may constitute the binding site for the phosphate moiety of the glycerol-3-phosphocholine.</text>
</comment>
<comment type="disruption phenotype">
    <text evidence="5 6">Delayed senescence (PubMed:33809440). The double mutants lpeat1 and lpeat2 exhibit impaired growth, small leaves, short roots, reduced seed setting, reduced lipid content per fresh weight in roots and seeds, and large increases in lysophosphatidylethanolamine (LPE) and lysophosphatidylcholine (LPC) contents in leaves.</text>
</comment>
<comment type="miscellaneous">
    <text evidence="10">The ratio of isoform 2/isoform 1 mRNA is increased about 15-fold in the nonsense mRNA reducing factor mutant upf3-1.</text>
</comment>
<comment type="miscellaneous">
    <molecule>Isoform 2</molecule>
    <text evidence="9">May be produced at very low levels due to a premature stop codon in the mRNA, leading to nonsense-mediated mRNA decay.</text>
</comment>
<comment type="similarity">
    <text evidence="9">Belongs to the 1-acyl-sn-glycerol-3-phosphate acyltransferase family.</text>
</comment>
<proteinExistence type="evidence at protein level"/>
<name>LPCT2_ARATH</name>
<keyword id="KW-0012">Acyltransferase</keyword>
<keyword id="KW-0025">Alternative splicing</keyword>
<keyword id="KW-0106">Calcium</keyword>
<keyword id="KW-0967">Endosome</keyword>
<keyword id="KW-0333">Golgi apparatus</keyword>
<keyword id="KW-0444">Lipid biosynthesis</keyword>
<keyword id="KW-0443">Lipid metabolism</keyword>
<keyword id="KW-0472">Membrane</keyword>
<keyword id="KW-0479">Metal-binding</keyword>
<keyword id="KW-0594">Phospholipid biosynthesis</keyword>
<keyword id="KW-1208">Phospholipid metabolism</keyword>
<keyword id="KW-1185">Reference proteome</keyword>
<keyword id="KW-0677">Repeat</keyword>
<keyword id="KW-0808">Transferase</keyword>
<keyword id="KW-0812">Transmembrane</keyword>
<keyword id="KW-1133">Transmembrane helix</keyword>
<sequence length="539" mass="61022">MADPDLSSPLIHHQSSDQPEVVISIADDDDDESGLNLLPAVVDPRVSRGFEFDHLNPYGFLSESEPPVLGPTTVDPFRNNTPGVSGLYEAIKLVICLPIALIRLVLFAASLAVGYLATKLALAGWKDKENPMPLWRCRIMWITRICTRCILFSFGYQWIRRKGKPARREIAPIVVSNHVSYIEPIFYFYELSPTIVASESHDSLPFVGTIIRAMQVIYVNRFSQTSRKNAVHEIKRKASCDRFPRLLLFPEGTTTNGKVLISFQLGAFIPGYPIQPVVVRYPHVHFDQSWGNISLLTLMFRMFTQFHNFMEVEYLPVIYPSEKQKQNAVRLSQKTSHAIATSLNVVQTSHSFADLMLLNKATELKLENPSNYMVEMARVESLFHVSSLEATRFLDTFVSMIPDSSGRVRLHDFLRGLKLKPCPLSKRIFEFIDVEKVGSITFKQFLFASGHVLTQPLFKQTCELAFSHCDADGDGYITIQELGEALKNTIPNLNKDEIRGMYHLLDDDQDQRISQNDLLSCLRRNPLLIAIFAPDLAPT</sequence>